<accession>Q21568</accession>
<evidence type="ECO:0000250" key="1"/>
<evidence type="ECO:0000305" key="2"/>
<evidence type="ECO:0000312" key="3">
    <source>
        <dbReference type="WormBase" id="M28.5"/>
    </source>
</evidence>
<feature type="chain" id="PRO_0000136781" description="Small nuclear ribonucleoprotein associated homolog 13">
    <location>
        <begin position="1"/>
        <end position="128"/>
    </location>
</feature>
<comment type="function">
    <text evidence="1">Binds to the 5'-stem-loop of U4 snRNA and may play a role in the late stage of spliceosome assembly. The protein undergoes a conformational change upon RNA-binding (By similarity).</text>
</comment>
<comment type="subcellular location">
    <subcellularLocation>
        <location evidence="1">Nucleus</location>
        <location evidence="1">Nucleolus</location>
    </subcellularLocation>
</comment>
<comment type="similarity">
    <text evidence="2">Belongs to the eukaryotic ribosomal protein eL8 family.</text>
</comment>
<reference key="1">
    <citation type="journal article" date="1998" name="Science">
        <title>Genome sequence of the nematode C. elegans: a platform for investigating biology.</title>
        <authorList>
            <consortium name="The C. elegans sequencing consortium"/>
        </authorList>
    </citation>
    <scope>NUCLEOTIDE SEQUENCE [LARGE SCALE GENOMIC DNA]</scope>
    <source>
        <strain>Bristol N2</strain>
    </source>
</reference>
<gene>
    <name evidence="3" type="primary">snu-13</name>
    <name type="ORF">M28.5</name>
</gene>
<organism>
    <name type="scientific">Caenorhabditis elegans</name>
    <dbReference type="NCBI Taxonomy" id="6239"/>
    <lineage>
        <taxon>Eukaryota</taxon>
        <taxon>Metazoa</taxon>
        <taxon>Ecdysozoa</taxon>
        <taxon>Nematoda</taxon>
        <taxon>Chromadorea</taxon>
        <taxon>Rhabditida</taxon>
        <taxon>Rhabditina</taxon>
        <taxon>Rhabditomorpha</taxon>
        <taxon>Rhabditoidea</taxon>
        <taxon>Rhabditidae</taxon>
        <taxon>Peloderinae</taxon>
        <taxon>Caenorhabditis</taxon>
    </lineage>
</organism>
<dbReference type="EMBL" id="Z49911">
    <property type="protein sequence ID" value="CAA90127.1"/>
    <property type="molecule type" value="Genomic_DNA"/>
</dbReference>
<dbReference type="PIR" id="T23808">
    <property type="entry name" value="T23808"/>
</dbReference>
<dbReference type="RefSeq" id="NP_001379076.1">
    <property type="nucleotide sequence ID" value="NM_001393180.1"/>
</dbReference>
<dbReference type="RefSeq" id="NP_496300.1">
    <property type="nucleotide sequence ID" value="NM_063899.5"/>
</dbReference>
<dbReference type="SMR" id="Q21568"/>
<dbReference type="BioGRID" id="39959">
    <property type="interactions" value="14"/>
</dbReference>
<dbReference type="FunCoup" id="Q21568">
    <property type="interactions" value="2331"/>
</dbReference>
<dbReference type="STRING" id="6239.M28.5.1"/>
<dbReference type="PaxDb" id="6239-M28.5.2"/>
<dbReference type="PeptideAtlas" id="Q21568"/>
<dbReference type="EnsemblMetazoa" id="M28.5.1">
    <property type="protein sequence ID" value="M28.5.1"/>
    <property type="gene ID" value="WBGene00010896"/>
</dbReference>
<dbReference type="GeneID" id="174645"/>
<dbReference type="UCSC" id="M28.5.1">
    <property type="organism name" value="c. elegans"/>
</dbReference>
<dbReference type="AGR" id="WB:WBGene00010896"/>
<dbReference type="WormBase" id="M28.5">
    <property type="protein sequence ID" value="CE02283"/>
    <property type="gene ID" value="WBGene00010896"/>
    <property type="gene designation" value="snu-13"/>
</dbReference>
<dbReference type="eggNOG" id="KOG3387">
    <property type="taxonomic scope" value="Eukaryota"/>
</dbReference>
<dbReference type="GeneTree" id="ENSGT00550000074840"/>
<dbReference type="HOGENOM" id="CLU_084513_4_1_1"/>
<dbReference type="InParanoid" id="Q21568"/>
<dbReference type="OMA" id="LACEDKG"/>
<dbReference type="OrthoDB" id="1924699at2759"/>
<dbReference type="PhylomeDB" id="Q21568"/>
<dbReference type="Reactome" id="R-CEL-6791226">
    <property type="pathway name" value="Major pathway of rRNA processing in the nucleolus and cytosol"/>
</dbReference>
<dbReference type="PRO" id="PR:Q21568"/>
<dbReference type="Proteomes" id="UP000001940">
    <property type="component" value="Chromosome II"/>
</dbReference>
<dbReference type="Bgee" id="WBGene00010896">
    <property type="expression patterns" value="Expressed in embryo and 4 other cell types or tissues"/>
</dbReference>
<dbReference type="GO" id="GO:0031428">
    <property type="term" value="C:box C/D methylation guide snoRNP complex"/>
    <property type="evidence" value="ECO:0000318"/>
    <property type="project" value="GO_Central"/>
</dbReference>
<dbReference type="GO" id="GO:0005730">
    <property type="term" value="C:nucleolus"/>
    <property type="evidence" value="ECO:0000318"/>
    <property type="project" value="GO_Central"/>
</dbReference>
<dbReference type="GO" id="GO:0071011">
    <property type="term" value="C:precatalytic spliceosome"/>
    <property type="evidence" value="ECO:0000318"/>
    <property type="project" value="GO_Central"/>
</dbReference>
<dbReference type="GO" id="GO:0032040">
    <property type="term" value="C:small-subunit processome"/>
    <property type="evidence" value="ECO:0000318"/>
    <property type="project" value="GO_Central"/>
</dbReference>
<dbReference type="GO" id="GO:0046540">
    <property type="term" value="C:U4/U6 x U5 tri-snRNP complex"/>
    <property type="evidence" value="ECO:0000318"/>
    <property type="project" value="GO_Central"/>
</dbReference>
<dbReference type="GO" id="GO:0003723">
    <property type="term" value="F:RNA binding"/>
    <property type="evidence" value="ECO:0000318"/>
    <property type="project" value="GO_Central"/>
</dbReference>
<dbReference type="GO" id="GO:0030490">
    <property type="term" value="P:maturation of SSU-rRNA"/>
    <property type="evidence" value="ECO:0000318"/>
    <property type="project" value="GO_Central"/>
</dbReference>
<dbReference type="GO" id="GO:0000398">
    <property type="term" value="P:mRNA splicing, via spliceosome"/>
    <property type="evidence" value="ECO:0000318"/>
    <property type="project" value="GO_Central"/>
</dbReference>
<dbReference type="CDD" id="cd21104">
    <property type="entry name" value="SNU13"/>
    <property type="match status" value="1"/>
</dbReference>
<dbReference type="FunFam" id="3.30.1330.30:FF:000002">
    <property type="entry name" value="NHP2-like protein 1 homolog"/>
    <property type="match status" value="1"/>
</dbReference>
<dbReference type="Gene3D" id="3.30.1330.30">
    <property type="match status" value="1"/>
</dbReference>
<dbReference type="InterPro" id="IPR050257">
    <property type="entry name" value="eL8/uL1-like"/>
</dbReference>
<dbReference type="InterPro" id="IPR002415">
    <property type="entry name" value="H/ACA_rnp_Nhp2-like"/>
</dbReference>
<dbReference type="InterPro" id="IPR029064">
    <property type="entry name" value="Ribosomal_eL30-like_sf"/>
</dbReference>
<dbReference type="InterPro" id="IPR004037">
    <property type="entry name" value="Ribosomal_eL8-like_CS"/>
</dbReference>
<dbReference type="InterPro" id="IPR004038">
    <property type="entry name" value="Ribosomal_eL8/eL30/eS12/Gad45"/>
</dbReference>
<dbReference type="InterPro" id="IPR018492">
    <property type="entry name" value="Ribosomal_eL8/Nhp2"/>
</dbReference>
<dbReference type="PANTHER" id="PTHR23105">
    <property type="entry name" value="RIBOSOMAL PROTEIN L7AE FAMILY MEMBER"/>
    <property type="match status" value="1"/>
</dbReference>
<dbReference type="Pfam" id="PF01248">
    <property type="entry name" value="Ribosomal_L7Ae"/>
    <property type="match status" value="1"/>
</dbReference>
<dbReference type="PRINTS" id="PR00881">
    <property type="entry name" value="L7ARS6FAMILY"/>
</dbReference>
<dbReference type="PRINTS" id="PR00883">
    <property type="entry name" value="NUCLEARHMG"/>
</dbReference>
<dbReference type="SUPFAM" id="SSF55315">
    <property type="entry name" value="L30e-like"/>
    <property type="match status" value="1"/>
</dbReference>
<dbReference type="PROSITE" id="PS01082">
    <property type="entry name" value="RIBOSOMAL_L7AE"/>
    <property type="match status" value="1"/>
</dbReference>
<protein>
    <recommendedName>
        <fullName evidence="2">Small nuclear ribonucleoprotein associated homolog 13</fullName>
    </recommendedName>
    <alternativeName>
        <fullName>NHP2-like protein 1 homolog</fullName>
    </alternativeName>
</protein>
<keyword id="KW-0507">mRNA processing</keyword>
<keyword id="KW-0508">mRNA splicing</keyword>
<keyword id="KW-0539">Nucleus</keyword>
<keyword id="KW-1185">Reference proteome</keyword>
<keyword id="KW-0687">Ribonucleoprotein</keyword>
<keyword id="KW-0694">RNA-binding</keyword>
<keyword id="KW-0747">Spliceosome</keyword>
<sequence>MADDGVNPKAFPLADTNLSQKLMDLVQQAMNYKQLKKGANEATKTLNRGISEIIVMAADAEPLEILLHLPLLCEDKNVPYVFVRSKAALGRACGVTRPVIAASITQNEGSQLKSQIQKIKEDVEKLLI</sequence>
<name>NH2L1_CAEEL</name>
<proteinExistence type="inferred from homology"/>